<feature type="chain" id="PRO_1000193127" description="Phosphate acyltransferase">
    <location>
        <begin position="1"/>
        <end position="335"/>
    </location>
</feature>
<protein>
    <recommendedName>
        <fullName evidence="1">Phosphate acyltransferase</fullName>
        <ecNumber evidence="1">2.3.1.274</ecNumber>
    </recommendedName>
    <alternativeName>
        <fullName evidence="1">Acyl-ACP phosphotransacylase</fullName>
    </alternativeName>
    <alternativeName>
        <fullName evidence="1">Acyl-[acyl-carrier-protein]--phosphate acyltransferase</fullName>
    </alternativeName>
    <alternativeName>
        <fullName evidence="1">Phosphate-acyl-ACP acyltransferase</fullName>
    </alternativeName>
</protein>
<reference key="1">
    <citation type="submission" date="2005-03" db="EMBL/GenBank/DDBJ databases">
        <title>Brevibacillus brevis strain 47, complete genome.</title>
        <authorList>
            <person name="Hosoyama A."/>
            <person name="Yamada R."/>
            <person name="Hongo Y."/>
            <person name="Terui Y."/>
            <person name="Ankai A."/>
            <person name="Masuyama W."/>
            <person name="Sekiguchi M."/>
            <person name="Takeda T."/>
            <person name="Asano K."/>
            <person name="Ohji S."/>
            <person name="Ichikawa N."/>
            <person name="Narita S."/>
            <person name="Aoki N."/>
            <person name="Miura H."/>
            <person name="Matsushita S."/>
            <person name="Sekigawa T."/>
            <person name="Yamagata H."/>
            <person name="Yoshikawa H."/>
            <person name="Udaka S."/>
            <person name="Tanikawa S."/>
            <person name="Fujita N."/>
        </authorList>
    </citation>
    <scope>NUCLEOTIDE SEQUENCE [LARGE SCALE GENOMIC DNA]</scope>
    <source>
        <strain>47 / JCM 6285 / NBRC 100599</strain>
    </source>
</reference>
<name>PLSX_BREBN</name>
<accession>C0ZFP6</accession>
<keyword id="KW-0963">Cytoplasm</keyword>
<keyword id="KW-0444">Lipid biosynthesis</keyword>
<keyword id="KW-0443">Lipid metabolism</keyword>
<keyword id="KW-0594">Phospholipid biosynthesis</keyword>
<keyword id="KW-1208">Phospholipid metabolism</keyword>
<keyword id="KW-1185">Reference proteome</keyword>
<keyword id="KW-0808">Transferase</keyword>
<evidence type="ECO:0000255" key="1">
    <source>
        <dbReference type="HAMAP-Rule" id="MF_00019"/>
    </source>
</evidence>
<proteinExistence type="inferred from homology"/>
<comment type="function">
    <text evidence="1">Catalyzes the reversible formation of acyl-phosphate (acyl-PO(4)) from acyl-[acyl-carrier-protein] (acyl-ACP). This enzyme utilizes acyl-ACP as fatty acyl donor, but not acyl-CoA.</text>
</comment>
<comment type="catalytic activity">
    <reaction evidence="1">
        <text>a fatty acyl-[ACP] + phosphate = an acyl phosphate + holo-[ACP]</text>
        <dbReference type="Rhea" id="RHEA:42292"/>
        <dbReference type="Rhea" id="RHEA-COMP:9685"/>
        <dbReference type="Rhea" id="RHEA-COMP:14125"/>
        <dbReference type="ChEBI" id="CHEBI:43474"/>
        <dbReference type="ChEBI" id="CHEBI:59918"/>
        <dbReference type="ChEBI" id="CHEBI:64479"/>
        <dbReference type="ChEBI" id="CHEBI:138651"/>
        <dbReference type="EC" id="2.3.1.274"/>
    </reaction>
</comment>
<comment type="pathway">
    <text evidence="1">Lipid metabolism; phospholipid metabolism.</text>
</comment>
<comment type="subunit">
    <text evidence="1">Homodimer. Probably interacts with PlsY.</text>
</comment>
<comment type="subcellular location">
    <subcellularLocation>
        <location evidence="1">Cytoplasm</location>
    </subcellularLocation>
    <text evidence="1">Associated with the membrane possibly through PlsY.</text>
</comment>
<comment type="similarity">
    <text evidence="1">Belongs to the PlsX family.</text>
</comment>
<sequence length="335" mass="35672">MRIAVDAMGGDHAPKSTVLGALAAIKENPAITVVLVGDEQAIRNHLPQDIPANIEIVPAAEVILPDDEPVRAVRRKKNSSLVVAVEMAREKKVDAMISAGNTGALMTAGLLYAGRMDGIERPALCAYIPNSKGRVTLTLDVGANMDAKPHQLVQYAVMGSLYAEKVLGFERPTVGLLNVGTEEGKGNELTKAVFPLLQEADLNFVGNVEARDVMQGACDVLVCDGFVGNVLLKAVEGAASTIFSQLKQEFTSSLINKLGAAILKPGLVRFKKKMDYAEYGGAPLLGLKSPVIKAHGSSNERAMKNAIVSATRFVQQDVNEVIQQSLQKNTLGESE</sequence>
<gene>
    <name evidence="1" type="primary">plsX</name>
    <name type="ordered locus">BBR47_36280</name>
</gene>
<dbReference type="EC" id="2.3.1.274" evidence="1"/>
<dbReference type="EMBL" id="AP008955">
    <property type="protein sequence ID" value="BAH44605.1"/>
    <property type="molecule type" value="Genomic_DNA"/>
</dbReference>
<dbReference type="RefSeq" id="WP_015891899.1">
    <property type="nucleotide sequence ID" value="NC_012491.1"/>
</dbReference>
<dbReference type="SMR" id="C0ZFP6"/>
<dbReference type="STRING" id="358681.BBR47_36280"/>
<dbReference type="KEGG" id="bbe:BBR47_36280"/>
<dbReference type="eggNOG" id="COG0416">
    <property type="taxonomic scope" value="Bacteria"/>
</dbReference>
<dbReference type="HOGENOM" id="CLU_039379_1_1_9"/>
<dbReference type="UniPathway" id="UPA00085"/>
<dbReference type="Proteomes" id="UP000001877">
    <property type="component" value="Chromosome"/>
</dbReference>
<dbReference type="GO" id="GO:0005737">
    <property type="term" value="C:cytoplasm"/>
    <property type="evidence" value="ECO:0007669"/>
    <property type="project" value="UniProtKB-SubCell"/>
</dbReference>
<dbReference type="GO" id="GO:0043811">
    <property type="term" value="F:phosphate:acyl-[acyl carrier protein] acyltransferase activity"/>
    <property type="evidence" value="ECO:0007669"/>
    <property type="project" value="UniProtKB-UniRule"/>
</dbReference>
<dbReference type="GO" id="GO:0006633">
    <property type="term" value="P:fatty acid biosynthetic process"/>
    <property type="evidence" value="ECO:0007669"/>
    <property type="project" value="UniProtKB-UniRule"/>
</dbReference>
<dbReference type="GO" id="GO:0008654">
    <property type="term" value="P:phospholipid biosynthetic process"/>
    <property type="evidence" value="ECO:0007669"/>
    <property type="project" value="UniProtKB-KW"/>
</dbReference>
<dbReference type="Gene3D" id="3.40.718.10">
    <property type="entry name" value="Isopropylmalate Dehydrogenase"/>
    <property type="match status" value="1"/>
</dbReference>
<dbReference type="HAMAP" id="MF_00019">
    <property type="entry name" value="PlsX"/>
    <property type="match status" value="1"/>
</dbReference>
<dbReference type="InterPro" id="IPR003664">
    <property type="entry name" value="FA_synthesis"/>
</dbReference>
<dbReference type="InterPro" id="IPR012281">
    <property type="entry name" value="Phospholipid_synth_PlsX-like"/>
</dbReference>
<dbReference type="NCBIfam" id="TIGR00182">
    <property type="entry name" value="plsX"/>
    <property type="match status" value="1"/>
</dbReference>
<dbReference type="PANTHER" id="PTHR30100">
    <property type="entry name" value="FATTY ACID/PHOSPHOLIPID SYNTHESIS PROTEIN PLSX"/>
    <property type="match status" value="1"/>
</dbReference>
<dbReference type="PANTHER" id="PTHR30100:SF1">
    <property type="entry name" value="PHOSPHATE ACYLTRANSFERASE"/>
    <property type="match status" value="1"/>
</dbReference>
<dbReference type="Pfam" id="PF02504">
    <property type="entry name" value="FA_synthesis"/>
    <property type="match status" value="1"/>
</dbReference>
<dbReference type="PIRSF" id="PIRSF002465">
    <property type="entry name" value="Phsphlp_syn_PlsX"/>
    <property type="match status" value="1"/>
</dbReference>
<dbReference type="SUPFAM" id="SSF53659">
    <property type="entry name" value="Isocitrate/Isopropylmalate dehydrogenase-like"/>
    <property type="match status" value="1"/>
</dbReference>
<organism>
    <name type="scientific">Brevibacillus brevis (strain 47 / JCM 6285 / NBRC 100599)</name>
    <dbReference type="NCBI Taxonomy" id="358681"/>
    <lineage>
        <taxon>Bacteria</taxon>
        <taxon>Bacillati</taxon>
        <taxon>Bacillota</taxon>
        <taxon>Bacilli</taxon>
        <taxon>Bacillales</taxon>
        <taxon>Paenibacillaceae</taxon>
        <taxon>Brevibacillus</taxon>
    </lineage>
</organism>